<comment type="function">
    <text evidence="1">Catalyzes the isomerization of sedoheptulose 7-phosphate in D-glycero-D-manno-heptose 7-phosphate.</text>
</comment>
<comment type="catalytic activity">
    <reaction evidence="1">
        <text>2 D-sedoheptulose 7-phosphate = D-glycero-alpha-D-manno-heptose 7-phosphate + D-glycero-beta-D-manno-heptose 7-phosphate</text>
        <dbReference type="Rhea" id="RHEA:27489"/>
        <dbReference type="ChEBI" id="CHEBI:57483"/>
        <dbReference type="ChEBI" id="CHEBI:60203"/>
        <dbReference type="ChEBI" id="CHEBI:60204"/>
        <dbReference type="EC" id="5.3.1.28"/>
    </reaction>
</comment>
<comment type="cofactor">
    <cofactor evidence="1">
        <name>Zn(2+)</name>
        <dbReference type="ChEBI" id="CHEBI:29105"/>
    </cofactor>
    <text evidence="1">Binds 1 zinc ion per subunit.</text>
</comment>
<comment type="pathway">
    <text evidence="1">Carbohydrate biosynthesis; D-glycero-D-manno-heptose 7-phosphate biosynthesis; D-glycero-alpha-D-manno-heptose 7-phosphate and D-glycero-beta-D-manno-heptose 7-phosphate from sedoheptulose 7-phosphate: step 1/1.</text>
</comment>
<comment type="subunit">
    <text evidence="1">Homotetramer.</text>
</comment>
<comment type="subcellular location">
    <subcellularLocation>
        <location evidence="1">Cytoplasm</location>
    </subcellularLocation>
</comment>
<comment type="miscellaneous">
    <text evidence="1">The reaction produces a racemic mixture of D-glycero-alpha-D-manno-heptose 7-phosphate and D-glycero-beta-D-manno-heptose 7-phosphate.</text>
</comment>
<comment type="miscellaneous">
    <text>B.aphidicola is not able to make lipopolysaccharides (LPS), and except lpcA and kdtB, the genes responsible for the biosynthesis of the LPS components are missing from the genome.</text>
</comment>
<comment type="similarity">
    <text evidence="1">Belongs to the SIS family. GmhA subfamily.</text>
</comment>
<dbReference type="EC" id="5.3.1.28" evidence="1"/>
<dbReference type="EMBL" id="BA000003">
    <property type="protein sequence ID" value="BAB12960.1"/>
    <property type="molecule type" value="Genomic_DNA"/>
</dbReference>
<dbReference type="RefSeq" id="NP_240074.1">
    <property type="nucleotide sequence ID" value="NC_002528.1"/>
</dbReference>
<dbReference type="RefSeq" id="WP_009874204.1">
    <property type="nucleotide sequence ID" value="NZ_AP036055.1"/>
</dbReference>
<dbReference type="SMR" id="P57338"/>
<dbReference type="STRING" id="563178.BUAP5A_245"/>
<dbReference type="EnsemblBacteria" id="BAB12960">
    <property type="protein sequence ID" value="BAB12960"/>
    <property type="gene ID" value="BAB12960"/>
</dbReference>
<dbReference type="KEGG" id="buc:BU250"/>
<dbReference type="PATRIC" id="fig|107806.10.peg.260"/>
<dbReference type="eggNOG" id="COG0279">
    <property type="taxonomic scope" value="Bacteria"/>
</dbReference>
<dbReference type="HOGENOM" id="CLU_080999_4_0_6"/>
<dbReference type="UniPathway" id="UPA00041">
    <property type="reaction ID" value="UER00436"/>
</dbReference>
<dbReference type="Proteomes" id="UP000001806">
    <property type="component" value="Chromosome"/>
</dbReference>
<dbReference type="GO" id="GO:0005737">
    <property type="term" value="C:cytoplasm"/>
    <property type="evidence" value="ECO:0007669"/>
    <property type="project" value="UniProtKB-SubCell"/>
</dbReference>
<dbReference type="GO" id="GO:0097367">
    <property type="term" value="F:carbohydrate derivative binding"/>
    <property type="evidence" value="ECO:0007669"/>
    <property type="project" value="InterPro"/>
</dbReference>
<dbReference type="GO" id="GO:0008968">
    <property type="term" value="F:D-sedoheptulose 7-phosphate isomerase activity"/>
    <property type="evidence" value="ECO:0007669"/>
    <property type="project" value="UniProtKB-UniRule"/>
</dbReference>
<dbReference type="GO" id="GO:0008270">
    <property type="term" value="F:zinc ion binding"/>
    <property type="evidence" value="ECO:0007669"/>
    <property type="project" value="UniProtKB-UniRule"/>
</dbReference>
<dbReference type="GO" id="GO:0005975">
    <property type="term" value="P:carbohydrate metabolic process"/>
    <property type="evidence" value="ECO:0007669"/>
    <property type="project" value="UniProtKB-UniRule"/>
</dbReference>
<dbReference type="GO" id="GO:2001061">
    <property type="term" value="P:D-glycero-D-manno-heptose 7-phosphate biosynthetic process"/>
    <property type="evidence" value="ECO:0007669"/>
    <property type="project" value="UniProtKB-UniPathway"/>
</dbReference>
<dbReference type="CDD" id="cd05006">
    <property type="entry name" value="SIS_GmhA"/>
    <property type="match status" value="1"/>
</dbReference>
<dbReference type="Gene3D" id="3.40.50.10490">
    <property type="entry name" value="Glucose-6-phosphate isomerase like protein, domain 1"/>
    <property type="match status" value="1"/>
</dbReference>
<dbReference type="HAMAP" id="MF_00067">
    <property type="entry name" value="GmhA"/>
    <property type="match status" value="1"/>
</dbReference>
<dbReference type="InterPro" id="IPR035461">
    <property type="entry name" value="GmhA/DiaA"/>
</dbReference>
<dbReference type="InterPro" id="IPR004515">
    <property type="entry name" value="Phosphoheptose_Isoase"/>
</dbReference>
<dbReference type="InterPro" id="IPR001347">
    <property type="entry name" value="SIS_dom"/>
</dbReference>
<dbReference type="InterPro" id="IPR046348">
    <property type="entry name" value="SIS_dom_sf"/>
</dbReference>
<dbReference type="InterPro" id="IPR050099">
    <property type="entry name" value="SIS_GmhA/DiaA_subfam"/>
</dbReference>
<dbReference type="NCBIfam" id="TIGR00441">
    <property type="entry name" value="gmhA"/>
    <property type="match status" value="1"/>
</dbReference>
<dbReference type="NCBIfam" id="NF001628">
    <property type="entry name" value="PRK00414.1"/>
    <property type="match status" value="1"/>
</dbReference>
<dbReference type="PANTHER" id="PTHR30390:SF7">
    <property type="entry name" value="PHOSPHOHEPTOSE ISOMERASE"/>
    <property type="match status" value="1"/>
</dbReference>
<dbReference type="PANTHER" id="PTHR30390">
    <property type="entry name" value="SEDOHEPTULOSE 7-PHOSPHATE ISOMERASE / DNAA INITIATOR-ASSOCIATING FACTOR FOR REPLICATION INITIATION"/>
    <property type="match status" value="1"/>
</dbReference>
<dbReference type="Pfam" id="PF13580">
    <property type="entry name" value="SIS_2"/>
    <property type="match status" value="1"/>
</dbReference>
<dbReference type="SUPFAM" id="SSF53697">
    <property type="entry name" value="SIS domain"/>
    <property type="match status" value="1"/>
</dbReference>
<dbReference type="PROSITE" id="PS51464">
    <property type="entry name" value="SIS"/>
    <property type="match status" value="1"/>
</dbReference>
<accession>P57338</accession>
<protein>
    <recommendedName>
        <fullName evidence="1">Phosphoheptose isomerase</fullName>
        <ecNumber evidence="1">5.3.1.28</ecNumber>
    </recommendedName>
    <alternativeName>
        <fullName evidence="1">Sedoheptulose 7-phosphate isomerase</fullName>
    </alternativeName>
</protein>
<evidence type="ECO:0000255" key="1">
    <source>
        <dbReference type="HAMAP-Rule" id="MF_00067"/>
    </source>
</evidence>
<organism>
    <name type="scientific">Buchnera aphidicola subsp. Acyrthosiphon pisum (strain APS)</name>
    <name type="common">Acyrthosiphon pisum symbiotic bacterium</name>
    <dbReference type="NCBI Taxonomy" id="107806"/>
    <lineage>
        <taxon>Bacteria</taxon>
        <taxon>Pseudomonadati</taxon>
        <taxon>Pseudomonadota</taxon>
        <taxon>Gammaproteobacteria</taxon>
        <taxon>Enterobacterales</taxon>
        <taxon>Erwiniaceae</taxon>
        <taxon>Buchnera</taxon>
    </lineage>
</organism>
<reference key="1">
    <citation type="journal article" date="2000" name="Nature">
        <title>Genome sequence of the endocellular bacterial symbiont of aphids Buchnera sp. APS.</title>
        <authorList>
            <person name="Shigenobu S."/>
            <person name="Watanabe H."/>
            <person name="Hattori M."/>
            <person name="Sakaki Y."/>
            <person name="Ishikawa H."/>
        </authorList>
    </citation>
    <scope>NUCLEOTIDE SEQUENCE [LARGE SCALE GENOMIC DNA]</scope>
    <source>
        <strain>APS</strain>
    </source>
</reference>
<sequence length="193" mass="21610">MYKKIIFSEFNSASKILKNFLEDKKQIENIQKAAILIAQSFKNEKKVISCGNGGSHCDAVHFSEELTSVYRKKRSGYPAISISDSSYISAVGNDFGYDQIFSRFIQSVGHLGDILLAISTSGNSLNIVRAIEEAKKKKMKVIVLTGNNAGKIKNLSDIEICIPHCGYSDRIQEMHIKIIHILILIIEKEMQKN</sequence>
<gene>
    <name evidence="1" type="primary">gmhA</name>
    <name type="synonym">lpcA</name>
    <name type="ordered locus">BU250</name>
</gene>
<keyword id="KW-0119">Carbohydrate metabolism</keyword>
<keyword id="KW-0963">Cytoplasm</keyword>
<keyword id="KW-0413">Isomerase</keyword>
<keyword id="KW-0479">Metal-binding</keyword>
<keyword id="KW-1185">Reference proteome</keyword>
<keyword id="KW-0862">Zinc</keyword>
<name>GMHA_BUCAI</name>
<proteinExistence type="inferred from homology"/>
<feature type="chain" id="PRO_0000136518" description="Phosphoheptose isomerase">
    <location>
        <begin position="1"/>
        <end position="193"/>
    </location>
</feature>
<feature type="domain" description="SIS" evidence="1">
    <location>
        <begin position="37"/>
        <end position="193"/>
    </location>
</feature>
<feature type="binding site" evidence="1">
    <location>
        <begin position="52"/>
        <end position="54"/>
    </location>
    <ligand>
        <name>substrate</name>
    </ligand>
</feature>
<feature type="binding site" evidence="1">
    <location>
        <position position="61"/>
    </location>
    <ligand>
        <name>Zn(2+)</name>
        <dbReference type="ChEBI" id="CHEBI:29105"/>
    </ligand>
</feature>
<feature type="binding site" evidence="1">
    <location>
        <position position="65"/>
    </location>
    <ligand>
        <name>substrate</name>
    </ligand>
</feature>
<feature type="binding site" evidence="1">
    <location>
        <position position="65"/>
    </location>
    <ligand>
        <name>Zn(2+)</name>
        <dbReference type="ChEBI" id="CHEBI:29105"/>
    </ligand>
</feature>
<feature type="binding site" evidence="1">
    <location>
        <begin position="93"/>
        <end position="94"/>
    </location>
    <ligand>
        <name>substrate</name>
    </ligand>
</feature>
<feature type="binding site" evidence="1">
    <location>
        <begin position="119"/>
        <end position="121"/>
    </location>
    <ligand>
        <name>substrate</name>
    </ligand>
</feature>
<feature type="binding site" evidence="1">
    <location>
        <position position="124"/>
    </location>
    <ligand>
        <name>substrate</name>
    </ligand>
</feature>
<feature type="binding site" evidence="1">
    <location>
        <position position="172"/>
    </location>
    <ligand>
        <name>substrate</name>
    </ligand>
</feature>
<feature type="binding site" evidence="1">
    <location>
        <position position="172"/>
    </location>
    <ligand>
        <name>Zn(2+)</name>
        <dbReference type="ChEBI" id="CHEBI:29105"/>
    </ligand>
</feature>
<feature type="binding site" evidence="1">
    <location>
        <position position="180"/>
    </location>
    <ligand>
        <name>Zn(2+)</name>
        <dbReference type="ChEBI" id="CHEBI:29105"/>
    </ligand>
</feature>